<evidence type="ECO:0000250" key="1"/>
<evidence type="ECO:0000255" key="2">
    <source>
        <dbReference type="PROSITE-ProRule" id="PRU00093"/>
    </source>
</evidence>
<evidence type="ECO:0000305" key="3"/>
<proteinExistence type="evidence at protein level"/>
<comment type="function">
    <text evidence="1">Subunit of clathrin-associated adaptor protein complex 1 that plays a role in protein sorting at the trans-Golgi network and early endosomes (TGN/EE). The AP complexes mediate both the recruitment of clathrin to membranes and the recognition of sorting signals within the cytosolic tails of transmembrane cargo molecules (By similarity).</text>
</comment>
<comment type="subunit">
    <text>Adaptor protein complex 1 (AP-1) is a heterotetramer composed of two large adaptins (gamma-type subunit and beta-type subunit), a medium adaptin (mu-type subunit) and a small adaptin (sigma-type subunit).</text>
</comment>
<comment type="subcellular location">
    <subcellularLocation>
        <location evidence="1">Golgi apparatus</location>
    </subcellularLocation>
    <subcellularLocation>
        <location evidence="1">Cytoplasmic vesicle</location>
        <location evidence="1">Clathrin-coated vesicle membrane</location>
        <topology evidence="1">Peripheral membrane protein</topology>
        <orientation evidence="1">Cytoplasmic side</orientation>
    </subcellularLocation>
</comment>
<comment type="alternative products">
    <event type="alternative splicing"/>
    <isoform>
        <id>Q9ZUI6-1</id>
        <name>1</name>
        <sequence type="displayed"/>
    </isoform>
    <text>A number of isoforms are produced. According to EST sequences.</text>
</comment>
<comment type="similarity">
    <text evidence="3">Belongs to the adaptor complexes large subunit family.</text>
</comment>
<comment type="sequence caution" evidence="3">
    <conflict type="erroneous gene model prediction">
        <sequence resource="EMBL-CDS" id="AAD14483"/>
    </conflict>
</comment>
<sequence length="862" mass="94670">MNPFSSGTRLSDMIRAIRASKTAAEERAVVRKECAAIRASINENDQDYRHRDLAKLMFIHMLGYPTHFGQMECLKLIASPGFPEKRIGYLGLMLLLDERQEVLMLVTNSLKQDLNHTNQYIVGLALCALGNICSAEMARDLAPEVERLLQFRDPNIRKKAALCAIRIIRKVPDLSENFINPGAALLKEKHHGVLITGVHLCTEICKVSSEALEYFRKKCTEGLVKTLRDIANSPYSPEYDVAGITDPFLHIRLLKLLRVLGQGDADASDCMNDILAQVASKTESNKNAGNAILYECVQTIMSIEENGGLRVLAINILGKFLSNRDNNIRYVALNMLMRSLTVDSQAVQRHRATILECVKDSDASIQKRALELIYLLVNENNVKPLAKELIEYLEVSEQDFKGDLTAKICSIVEKFAPEKIWYIDQMLKVLSEAGTYVKEDVWHALIVVITNAPDLHGYTVRALYRALHTSFEQETLVRVAIWCIGEYADLLVNNAGMLDLEDPITVTESDAVDVVENAIKHHLSDVTTKAMALIALLKISSRFPSCSERVKSIIGQNKGSFVLELQQRSLEFSSVIQKHQNIRSSLVERMPVLDEATFSGRRAGSLPASVSTSGKSPLGIPNGVAKAAAPLVDLLDLGSDDTPAPTSSSNNFLQDLLGVDLSQPSAQPGAMQPSQAGADILMDLLSIGTPAPVQNGSANGDLLSIQDNNAPIAPSLTSPTAPSSMMDLLDGFGPTPPKSEDKSAAYPSIVAFESSSLKIEFNFTKQSENPQTTDIVANFINLTPNVYTEFLFQAAVPKFLQLHLDPASSNSLPANGNIKQTMRVTNSQKGKKPIVMRMRVGYKINGKDVLEEGQINNFPRGL</sequence>
<keyword id="KW-0025">Alternative splicing</keyword>
<keyword id="KW-0968">Cytoplasmic vesicle</keyword>
<keyword id="KW-0333">Golgi apparatus</keyword>
<keyword id="KW-0472">Membrane</keyword>
<keyword id="KW-0653">Protein transport</keyword>
<keyword id="KW-1185">Reference proteome</keyword>
<keyword id="KW-0677">Repeat</keyword>
<keyword id="KW-0813">Transport</keyword>
<organism>
    <name type="scientific">Arabidopsis thaliana</name>
    <name type="common">Mouse-ear cress</name>
    <dbReference type="NCBI Taxonomy" id="3702"/>
    <lineage>
        <taxon>Eukaryota</taxon>
        <taxon>Viridiplantae</taxon>
        <taxon>Streptophyta</taxon>
        <taxon>Embryophyta</taxon>
        <taxon>Tracheophyta</taxon>
        <taxon>Spermatophyta</taxon>
        <taxon>Magnoliopsida</taxon>
        <taxon>eudicotyledons</taxon>
        <taxon>Gunneridae</taxon>
        <taxon>Pentapetalae</taxon>
        <taxon>rosids</taxon>
        <taxon>malvids</taxon>
        <taxon>Brassicales</taxon>
        <taxon>Brassicaceae</taxon>
        <taxon>Camelineae</taxon>
        <taxon>Arabidopsis</taxon>
    </lineage>
</organism>
<accession>Q9ZUI6</accession>
<accession>Q0WSK2</accession>
<dbReference type="EMBL" id="AC005966">
    <property type="protein sequence ID" value="AAD14483.1"/>
    <property type="status" value="ALT_SEQ"/>
    <property type="molecule type" value="Genomic_DNA"/>
</dbReference>
<dbReference type="EMBL" id="CP002684">
    <property type="protein sequence ID" value="AEE33655.1"/>
    <property type="molecule type" value="Genomic_DNA"/>
</dbReference>
<dbReference type="EMBL" id="AK227926">
    <property type="protein sequence ID" value="BAE99896.1"/>
    <property type="molecule type" value="mRNA"/>
</dbReference>
<dbReference type="PIR" id="B96625">
    <property type="entry name" value="B96625"/>
</dbReference>
<dbReference type="RefSeq" id="NP_176215.2">
    <molecule id="Q9ZUI6-1"/>
    <property type="nucleotide sequence ID" value="NM_104699.3"/>
</dbReference>
<dbReference type="SMR" id="Q9ZUI6"/>
<dbReference type="BioGRID" id="27526">
    <property type="interactions" value="6"/>
</dbReference>
<dbReference type="FunCoup" id="Q9ZUI6">
    <property type="interactions" value="4260"/>
</dbReference>
<dbReference type="STRING" id="3702.Q9ZUI6"/>
<dbReference type="GlyGen" id="Q9ZUI6">
    <property type="glycosylation" value="2 sites"/>
</dbReference>
<dbReference type="iPTMnet" id="Q9ZUI6"/>
<dbReference type="PaxDb" id="3702-AT1G60070.2"/>
<dbReference type="ProteomicsDB" id="244961">
    <molecule id="Q9ZUI6-1"/>
</dbReference>
<dbReference type="EnsemblPlants" id="AT1G60070.1">
    <molecule id="Q9ZUI6-1"/>
    <property type="protein sequence ID" value="AT1G60070.1"/>
    <property type="gene ID" value="AT1G60070"/>
</dbReference>
<dbReference type="GeneID" id="842301"/>
<dbReference type="Gramene" id="AT1G60070.1">
    <molecule id="Q9ZUI6-1"/>
    <property type="protein sequence ID" value="AT1G60070.1"/>
    <property type="gene ID" value="AT1G60070"/>
</dbReference>
<dbReference type="KEGG" id="ath:AT1G60070"/>
<dbReference type="Araport" id="AT1G60070"/>
<dbReference type="TAIR" id="AT1G60070"/>
<dbReference type="eggNOG" id="KOG1062">
    <property type="taxonomic scope" value="Eukaryota"/>
</dbReference>
<dbReference type="HOGENOM" id="CLU_003824_0_0_1"/>
<dbReference type="InParanoid" id="Q9ZUI6"/>
<dbReference type="OMA" id="AICAMRI"/>
<dbReference type="PhylomeDB" id="Q9ZUI6"/>
<dbReference type="PRO" id="PR:Q9ZUI6"/>
<dbReference type="Proteomes" id="UP000006548">
    <property type="component" value="Chromosome 1"/>
</dbReference>
<dbReference type="ExpressionAtlas" id="Q9ZUI6">
    <property type="expression patterns" value="baseline and differential"/>
</dbReference>
<dbReference type="GO" id="GO:0030121">
    <property type="term" value="C:AP-1 adaptor complex"/>
    <property type="evidence" value="ECO:0007669"/>
    <property type="project" value="InterPro"/>
</dbReference>
<dbReference type="GO" id="GO:0006886">
    <property type="term" value="P:intracellular protein transport"/>
    <property type="evidence" value="ECO:0007669"/>
    <property type="project" value="InterPro"/>
</dbReference>
<dbReference type="GO" id="GO:0016192">
    <property type="term" value="P:vesicle-mediated transport"/>
    <property type="evidence" value="ECO:0007669"/>
    <property type="project" value="InterPro"/>
</dbReference>
<dbReference type="FunFam" id="1.25.10.10:FF:000030">
    <property type="entry name" value="AP-1 complex subunit gamma"/>
    <property type="match status" value="1"/>
</dbReference>
<dbReference type="FunFam" id="2.60.40.1230:FF:000008">
    <property type="entry name" value="AP-1 complex subunit gamma"/>
    <property type="match status" value="1"/>
</dbReference>
<dbReference type="Gene3D" id="2.60.40.1230">
    <property type="match status" value="1"/>
</dbReference>
<dbReference type="Gene3D" id="1.25.10.10">
    <property type="entry name" value="Leucine-rich Repeat Variant"/>
    <property type="match status" value="1"/>
</dbReference>
<dbReference type="InterPro" id="IPR050840">
    <property type="entry name" value="Adaptor_Complx_Large_Subunit"/>
</dbReference>
<dbReference type="InterPro" id="IPR017107">
    <property type="entry name" value="AP1_complex_gsu"/>
</dbReference>
<dbReference type="InterPro" id="IPR011989">
    <property type="entry name" value="ARM-like"/>
</dbReference>
<dbReference type="InterPro" id="IPR016024">
    <property type="entry name" value="ARM-type_fold"/>
</dbReference>
<dbReference type="InterPro" id="IPR002553">
    <property type="entry name" value="Clathrin/coatomer_adapt-like_N"/>
</dbReference>
<dbReference type="InterPro" id="IPR008152">
    <property type="entry name" value="Clathrin_a/b/g-adaptin_app_Ig"/>
</dbReference>
<dbReference type="InterPro" id="IPR013041">
    <property type="entry name" value="Clathrin_app_Ig-like_sf"/>
</dbReference>
<dbReference type="InterPro" id="IPR008153">
    <property type="entry name" value="GAE_dom"/>
</dbReference>
<dbReference type="PANTHER" id="PTHR22780">
    <property type="entry name" value="ADAPTIN, ALPHA/GAMMA/EPSILON"/>
    <property type="match status" value="1"/>
</dbReference>
<dbReference type="Pfam" id="PF01602">
    <property type="entry name" value="Adaptin_N"/>
    <property type="match status" value="1"/>
</dbReference>
<dbReference type="Pfam" id="PF02883">
    <property type="entry name" value="Alpha_adaptinC2"/>
    <property type="match status" value="1"/>
</dbReference>
<dbReference type="PIRSF" id="PIRSF037094">
    <property type="entry name" value="AP1_complex_gamma"/>
    <property type="match status" value="1"/>
</dbReference>
<dbReference type="SMART" id="SM00809">
    <property type="entry name" value="Alpha_adaptinC2"/>
    <property type="match status" value="1"/>
</dbReference>
<dbReference type="SUPFAM" id="SSF48371">
    <property type="entry name" value="ARM repeat"/>
    <property type="match status" value="1"/>
</dbReference>
<dbReference type="SUPFAM" id="SSF49348">
    <property type="entry name" value="Clathrin adaptor appendage domain"/>
    <property type="match status" value="1"/>
</dbReference>
<dbReference type="PROSITE" id="PS50180">
    <property type="entry name" value="GAE"/>
    <property type="match status" value="1"/>
</dbReference>
<gene>
    <name type="ordered locus">At1g60070</name>
    <name type="ORF">T2K10.12</name>
</gene>
<feature type="chain" id="PRO_0000397853" description="AP-1 complex subunit gamma-2">
    <location>
        <begin position="1"/>
        <end position="862"/>
    </location>
</feature>
<feature type="repeat" description="HEAT 1">
    <location>
        <begin position="1"/>
        <end position="28"/>
    </location>
</feature>
<feature type="repeat" description="HEAT 2">
    <location>
        <begin position="29"/>
        <end position="65"/>
    </location>
</feature>
<feature type="repeat" description="HEAT 3">
    <location>
        <begin position="101"/>
        <end position="136"/>
    </location>
</feature>
<feature type="repeat" description="HEAT 4">
    <location>
        <begin position="137"/>
        <end position="173"/>
    </location>
</feature>
<feature type="repeat" description="HEAT 5">
    <location>
        <begin position="308"/>
        <end position="345"/>
    </location>
</feature>
<feature type="repeat" description="HEAT 6">
    <location>
        <begin position="346"/>
        <end position="382"/>
    </location>
</feature>
<feature type="repeat" description="HEAT 7">
    <location>
        <begin position="384"/>
        <end position="417"/>
    </location>
</feature>
<feature type="repeat" description="HEAT 8">
    <location>
        <begin position="418"/>
        <end position="454"/>
    </location>
</feature>
<feature type="repeat" description="HEAT 9">
    <location>
        <begin position="458"/>
        <end position="496"/>
    </location>
</feature>
<feature type="repeat" description="HEAT 10">
    <location>
        <begin position="507"/>
        <end position="545"/>
    </location>
</feature>
<feature type="repeat" description="HEAT 11">
    <location>
        <begin position="560"/>
        <end position="599"/>
    </location>
</feature>
<feature type="domain" description="GAE" evidence="2">
    <location>
        <begin position="744"/>
        <end position="859"/>
    </location>
</feature>
<feature type="sequence conflict" description="In Ref. 3; BAE99896." evidence="3" ref="3">
    <original>L</original>
    <variation>P</variation>
    <location>
        <position position="227"/>
    </location>
</feature>
<name>AP1G2_ARATH</name>
<protein>
    <recommendedName>
        <fullName>AP-1 complex subunit gamma-2</fullName>
    </recommendedName>
    <alternativeName>
        <fullName>Adaptor protein complex AP-1 large subunit gamma-2</fullName>
    </alternativeName>
    <alternativeName>
        <fullName>Adaptor-related protein complex 1 subunit gamma-2</fullName>
    </alternativeName>
    <alternativeName>
        <fullName>Clathrin assembly protein complex 1 gamma-2 large chain</fullName>
    </alternativeName>
    <alternativeName>
        <fullName>Gamma-adaptin 2</fullName>
    </alternativeName>
</protein>
<reference key="1">
    <citation type="journal article" date="2000" name="Nature">
        <title>Sequence and analysis of chromosome 1 of the plant Arabidopsis thaliana.</title>
        <authorList>
            <person name="Theologis A."/>
            <person name="Ecker J.R."/>
            <person name="Palm C.J."/>
            <person name="Federspiel N.A."/>
            <person name="Kaul S."/>
            <person name="White O."/>
            <person name="Alonso J."/>
            <person name="Altafi H."/>
            <person name="Araujo R."/>
            <person name="Bowman C.L."/>
            <person name="Brooks S.Y."/>
            <person name="Buehler E."/>
            <person name="Chan A."/>
            <person name="Chao Q."/>
            <person name="Chen H."/>
            <person name="Cheuk R.F."/>
            <person name="Chin C.W."/>
            <person name="Chung M.K."/>
            <person name="Conn L."/>
            <person name="Conway A.B."/>
            <person name="Conway A.R."/>
            <person name="Creasy T.H."/>
            <person name="Dewar K."/>
            <person name="Dunn P."/>
            <person name="Etgu P."/>
            <person name="Feldblyum T.V."/>
            <person name="Feng J.-D."/>
            <person name="Fong B."/>
            <person name="Fujii C.Y."/>
            <person name="Gill J.E."/>
            <person name="Goldsmith A.D."/>
            <person name="Haas B."/>
            <person name="Hansen N.F."/>
            <person name="Hughes B."/>
            <person name="Huizar L."/>
            <person name="Hunter J.L."/>
            <person name="Jenkins J."/>
            <person name="Johnson-Hopson C."/>
            <person name="Khan S."/>
            <person name="Khaykin E."/>
            <person name="Kim C.J."/>
            <person name="Koo H.L."/>
            <person name="Kremenetskaia I."/>
            <person name="Kurtz D.B."/>
            <person name="Kwan A."/>
            <person name="Lam B."/>
            <person name="Langin-Hooper S."/>
            <person name="Lee A."/>
            <person name="Lee J.M."/>
            <person name="Lenz C.A."/>
            <person name="Li J.H."/>
            <person name="Li Y.-P."/>
            <person name="Lin X."/>
            <person name="Liu S.X."/>
            <person name="Liu Z.A."/>
            <person name="Luros J.S."/>
            <person name="Maiti R."/>
            <person name="Marziali A."/>
            <person name="Militscher J."/>
            <person name="Miranda M."/>
            <person name="Nguyen M."/>
            <person name="Nierman W.C."/>
            <person name="Osborne B.I."/>
            <person name="Pai G."/>
            <person name="Peterson J."/>
            <person name="Pham P.K."/>
            <person name="Rizzo M."/>
            <person name="Rooney T."/>
            <person name="Rowley D."/>
            <person name="Sakano H."/>
            <person name="Salzberg S.L."/>
            <person name="Schwartz J.R."/>
            <person name="Shinn P."/>
            <person name="Southwick A.M."/>
            <person name="Sun H."/>
            <person name="Tallon L.J."/>
            <person name="Tambunga G."/>
            <person name="Toriumi M.J."/>
            <person name="Town C.D."/>
            <person name="Utterback T."/>
            <person name="Van Aken S."/>
            <person name="Vaysberg M."/>
            <person name="Vysotskaia V.S."/>
            <person name="Walker M."/>
            <person name="Wu D."/>
            <person name="Yu G."/>
            <person name="Fraser C.M."/>
            <person name="Venter J.C."/>
            <person name="Davis R.W."/>
        </authorList>
    </citation>
    <scope>NUCLEOTIDE SEQUENCE [LARGE SCALE GENOMIC DNA]</scope>
    <source>
        <strain>cv. Columbia</strain>
    </source>
</reference>
<reference key="2">
    <citation type="journal article" date="2017" name="Plant J.">
        <title>Araport11: a complete reannotation of the Arabidopsis thaliana reference genome.</title>
        <authorList>
            <person name="Cheng C.Y."/>
            <person name="Krishnakumar V."/>
            <person name="Chan A.P."/>
            <person name="Thibaud-Nissen F."/>
            <person name="Schobel S."/>
            <person name="Town C.D."/>
        </authorList>
    </citation>
    <scope>GENOME REANNOTATION</scope>
    <source>
        <strain>cv. Columbia</strain>
    </source>
</reference>
<reference key="3">
    <citation type="submission" date="2006-07" db="EMBL/GenBank/DDBJ databases">
        <title>Large-scale analysis of RIKEN Arabidopsis full-length (RAFL) cDNAs.</title>
        <authorList>
            <person name="Totoki Y."/>
            <person name="Seki M."/>
            <person name="Ishida J."/>
            <person name="Nakajima M."/>
            <person name="Enju A."/>
            <person name="Kamiya A."/>
            <person name="Narusaka M."/>
            <person name="Shin-i T."/>
            <person name="Nakagawa M."/>
            <person name="Sakamoto N."/>
            <person name="Oishi K."/>
            <person name="Kohara Y."/>
            <person name="Kobayashi M."/>
            <person name="Toyoda A."/>
            <person name="Sakaki Y."/>
            <person name="Sakurai T."/>
            <person name="Iida K."/>
            <person name="Akiyama K."/>
            <person name="Satou M."/>
            <person name="Toyoda T."/>
            <person name="Konagaya A."/>
            <person name="Carninci P."/>
            <person name="Kawai J."/>
            <person name="Hayashizaki Y."/>
            <person name="Shinozaki K."/>
        </authorList>
    </citation>
    <scope>NUCLEOTIDE SEQUENCE [LARGE SCALE MRNA]</scope>
    <source>
        <strain>cv. Columbia</strain>
    </source>
</reference>
<reference key="4">
    <citation type="journal article" date="2001" name="Mol. Biol. Cell">
        <title>Adaptins: the final recount.</title>
        <authorList>
            <person name="Boehm M."/>
            <person name="Bonifacino J.S."/>
        </authorList>
    </citation>
    <scope>GENE FAMILY</scope>
    <scope>REVIEW</scope>
</reference>
<reference key="5">
    <citation type="journal article" date="2013" name="Plant Cell Physiol.">
        <title>The AP-1 mu adaptin is required for KNOLLE localization at the cell plate to mediate cytokinesis in Arabidopsis.</title>
        <authorList>
            <person name="Teh O.K."/>
            <person name="Shimono Y."/>
            <person name="Shirakawa M."/>
            <person name="Fukao Y."/>
            <person name="Tamura K."/>
            <person name="Shimada T."/>
            <person name="Hara-Nishimura I."/>
        </authorList>
    </citation>
    <scope>IDENTIFICATION BY MASS SPECTROMETRY</scope>
    <scope>COMPONENT OF THE AP-1 COMPLEX</scope>
</reference>